<dbReference type="EMBL" id="AB065736">
    <property type="protein sequence ID" value="BAC05957.1"/>
    <property type="status" value="ALT_INIT"/>
    <property type="molecule type" value="Genomic_DNA"/>
</dbReference>
<dbReference type="EMBL" id="AF399557">
    <property type="protein sequence ID" value="AAK95042.1"/>
    <property type="molecule type" value="Genomic_DNA"/>
</dbReference>
<dbReference type="EMBL" id="BK004297">
    <property type="protein sequence ID" value="DAA04695.1"/>
    <property type="molecule type" value="Genomic_DNA"/>
</dbReference>
<dbReference type="RefSeq" id="NP_001004459.1">
    <property type="nucleotide sequence ID" value="NM_001004459.1"/>
</dbReference>
<dbReference type="SMR" id="Q8NGQ3"/>
<dbReference type="FunCoup" id="Q8NGQ3">
    <property type="interactions" value="551"/>
</dbReference>
<dbReference type="STRING" id="9606.ENSP00000305469"/>
<dbReference type="GlyCosmos" id="Q8NGQ3">
    <property type="glycosylation" value="1 site, No reported glycans"/>
</dbReference>
<dbReference type="GlyGen" id="Q8NGQ3">
    <property type="glycosylation" value="1 site"/>
</dbReference>
<dbReference type="iPTMnet" id="Q8NGQ3"/>
<dbReference type="PhosphoSitePlus" id="Q8NGQ3"/>
<dbReference type="BioMuta" id="OR1S2"/>
<dbReference type="DMDM" id="223590115"/>
<dbReference type="PaxDb" id="9606-ENSP00000305469"/>
<dbReference type="ProteomicsDB" id="73575"/>
<dbReference type="Antibodypedia" id="58756">
    <property type="antibodies" value="72 antibodies from 20 providers"/>
</dbReference>
<dbReference type="DNASU" id="219958"/>
<dbReference type="GeneID" id="219958"/>
<dbReference type="KEGG" id="hsa:219958"/>
<dbReference type="UCSC" id="uc010rkb.3">
    <property type="organism name" value="human"/>
</dbReference>
<dbReference type="AGR" id="HGNC:15141"/>
<dbReference type="CTD" id="219958"/>
<dbReference type="DisGeNET" id="219958"/>
<dbReference type="GeneCards" id="OR1S2"/>
<dbReference type="HGNC" id="HGNC:15141">
    <property type="gene designation" value="OR1S2"/>
</dbReference>
<dbReference type="MalaCards" id="OR1S2"/>
<dbReference type="neXtProt" id="NX_Q8NGQ3"/>
<dbReference type="PharmGKB" id="PA32099"/>
<dbReference type="VEuPathDB" id="HostDB:ENSG00000197887"/>
<dbReference type="eggNOG" id="ENOG502RQAM">
    <property type="taxonomic scope" value="Eukaryota"/>
</dbReference>
<dbReference type="HOGENOM" id="CLU_012526_5_5_1"/>
<dbReference type="InParanoid" id="Q8NGQ3"/>
<dbReference type="OrthoDB" id="9444602at2759"/>
<dbReference type="PAN-GO" id="Q8NGQ3">
    <property type="GO annotations" value="3 GO annotations based on evolutionary models"/>
</dbReference>
<dbReference type="PhylomeDB" id="Q8NGQ3"/>
<dbReference type="TreeFam" id="TF337210"/>
<dbReference type="PathwayCommons" id="Q8NGQ3"/>
<dbReference type="Reactome" id="R-HSA-9752946">
    <property type="pathway name" value="Expression and translocation of olfactory receptors"/>
</dbReference>
<dbReference type="BioGRID-ORCS" id="219958">
    <property type="hits" value="4 hits in 686 CRISPR screens"/>
</dbReference>
<dbReference type="GeneWiki" id="OR1S2"/>
<dbReference type="GenomeRNAi" id="219958"/>
<dbReference type="Pharos" id="Q8NGQ3">
    <property type="development level" value="Tdark"/>
</dbReference>
<dbReference type="PRO" id="PR:Q8NGQ3"/>
<dbReference type="Proteomes" id="UP000005640">
    <property type="component" value="Chromosome 11"/>
</dbReference>
<dbReference type="RNAct" id="Q8NGQ3">
    <property type="molecule type" value="protein"/>
</dbReference>
<dbReference type="GO" id="GO:0005886">
    <property type="term" value="C:plasma membrane"/>
    <property type="evidence" value="ECO:0000318"/>
    <property type="project" value="GO_Central"/>
</dbReference>
<dbReference type="GO" id="GO:0004930">
    <property type="term" value="F:G protein-coupled receptor activity"/>
    <property type="evidence" value="ECO:0007669"/>
    <property type="project" value="UniProtKB-KW"/>
</dbReference>
<dbReference type="GO" id="GO:0004984">
    <property type="term" value="F:olfactory receptor activity"/>
    <property type="evidence" value="ECO:0000318"/>
    <property type="project" value="GO_Central"/>
</dbReference>
<dbReference type="GO" id="GO:0007165">
    <property type="term" value="P:signal transduction"/>
    <property type="evidence" value="ECO:0000318"/>
    <property type="project" value="GO_Central"/>
</dbReference>
<dbReference type="CDD" id="cd15918">
    <property type="entry name" value="7tmA_OR1_7-like"/>
    <property type="match status" value="1"/>
</dbReference>
<dbReference type="FunFam" id="1.20.1070.10:FF:000009">
    <property type="entry name" value="Olfactory receptor"/>
    <property type="match status" value="1"/>
</dbReference>
<dbReference type="Gene3D" id="1.20.1070.10">
    <property type="entry name" value="Rhodopsin 7-helix transmembrane proteins"/>
    <property type="match status" value="1"/>
</dbReference>
<dbReference type="InterPro" id="IPR000276">
    <property type="entry name" value="GPCR_Rhodpsn"/>
</dbReference>
<dbReference type="InterPro" id="IPR017452">
    <property type="entry name" value="GPCR_Rhodpsn_7TM"/>
</dbReference>
<dbReference type="InterPro" id="IPR000725">
    <property type="entry name" value="Olfact_rcpt"/>
</dbReference>
<dbReference type="PANTHER" id="PTHR48001">
    <property type="entry name" value="OLFACTORY RECEPTOR"/>
    <property type="match status" value="1"/>
</dbReference>
<dbReference type="Pfam" id="PF13853">
    <property type="entry name" value="7tm_4"/>
    <property type="match status" value="1"/>
</dbReference>
<dbReference type="PRINTS" id="PR00237">
    <property type="entry name" value="GPCRRHODOPSN"/>
</dbReference>
<dbReference type="PRINTS" id="PR00245">
    <property type="entry name" value="OLFACTORYR"/>
</dbReference>
<dbReference type="SUPFAM" id="SSF81321">
    <property type="entry name" value="Family A G protein-coupled receptor-like"/>
    <property type="match status" value="1"/>
</dbReference>
<dbReference type="PROSITE" id="PS50262">
    <property type="entry name" value="G_PROTEIN_RECEP_F1_2"/>
    <property type="match status" value="1"/>
</dbReference>
<accession>Q8NGQ3</accession>
<accession>Q6IFG5</accession>
<accession>Q96R85</accession>
<reference key="1">
    <citation type="submission" date="2001-07" db="EMBL/GenBank/DDBJ databases">
        <title>Genome-wide discovery and analysis of human seven transmembrane helix receptor genes.</title>
        <authorList>
            <person name="Suwa M."/>
            <person name="Sato T."/>
            <person name="Okouchi I."/>
            <person name="Arita M."/>
            <person name="Futami K."/>
            <person name="Matsumoto S."/>
            <person name="Tsutsumi S."/>
            <person name="Aburatani H."/>
            <person name="Asai K."/>
            <person name="Akiyama Y."/>
        </authorList>
    </citation>
    <scope>NUCLEOTIDE SEQUENCE [GENOMIC DNA]</scope>
</reference>
<reference key="2">
    <citation type="journal article" date="2002" name="Genomics">
        <title>DEFOG: a practical scheme for deciphering families of genes.</title>
        <authorList>
            <person name="Fuchs T."/>
            <person name="Malecova B."/>
            <person name="Linhart C."/>
            <person name="Sharan R."/>
            <person name="Khen M."/>
            <person name="Herwig R."/>
            <person name="Shmulevich D."/>
            <person name="Elkon R."/>
            <person name="Steinfath M."/>
            <person name="O'Brien J.K."/>
            <person name="Radelof U."/>
            <person name="Lehrach H."/>
            <person name="Lancet D."/>
            <person name="Shamir R."/>
        </authorList>
    </citation>
    <scope>NUCLEOTIDE SEQUENCE [GENOMIC DNA] OF 81-296</scope>
</reference>
<reference key="3">
    <citation type="journal article" date="2004" name="Proc. Natl. Acad. Sci. U.S.A.">
        <title>The human olfactory receptor gene family.</title>
        <authorList>
            <person name="Malnic B."/>
            <person name="Godfrey P.A."/>
            <person name="Buck L.B."/>
        </authorList>
    </citation>
    <scope>IDENTIFICATION</scope>
</reference>
<reference key="4">
    <citation type="journal article" date="2004" name="Proc. Natl. Acad. Sci. U.S.A.">
        <authorList>
            <person name="Malnic B."/>
            <person name="Godfrey P.A."/>
            <person name="Buck L.B."/>
        </authorList>
    </citation>
    <scope>ERRATUM OF PUBMED:14983052</scope>
</reference>
<name>OR1S2_HUMAN</name>
<protein>
    <recommendedName>
        <fullName>Olfactory receptor 1S2</fullName>
    </recommendedName>
    <alternativeName>
        <fullName>Olfactory receptor OR11-231</fullName>
    </alternativeName>
</protein>
<evidence type="ECO:0000255" key="1"/>
<evidence type="ECO:0000255" key="2">
    <source>
        <dbReference type="PROSITE-ProRule" id="PRU00521"/>
    </source>
</evidence>
<evidence type="ECO:0000305" key="3"/>
<sequence length="325" mass="36579">MKTLCSFLQISRNMHQENQTTITEFILLGLSNQAEHQNLLFVLFLSMYVVTVVGNGLIIVAISLDIYLHTPMYLFLAYLSFADISSISNSVPKMLVNIQTNSQSISYESCITQMYFSIVFVVTDNLLLGTMAFDHFVAICHPLNYTTFMRARFGTLLTVISWFLSNIIALTHTLLLIQLLFCDHNTLPHFFCDLAPLLKLSCSDTMINELVLFIVGLSVIIFPFVLIFFSYVCIIRAVLGVSSTQGKWKAFSTCGSHLTIALLFYGTTVGVYFFPSSTHPEDTDKIGAVLFTVVTPMMNPFIYSLRNKDMKGALRKLINRKISSL</sequence>
<comment type="function">
    <text evidence="3">Odorant receptor.</text>
</comment>
<comment type="subcellular location">
    <subcellularLocation>
        <location>Cell membrane</location>
        <topology>Multi-pass membrane protein</topology>
    </subcellularLocation>
</comment>
<comment type="similarity">
    <text evidence="2">Belongs to the G-protein coupled receptor 1 family.</text>
</comment>
<comment type="caution">
    <text evidence="3">It is uncertain whether Met-1 or Met-14 is the initiator.</text>
</comment>
<comment type="sequence caution" evidence="3">
    <conflict type="erroneous initiation">
        <sequence resource="EMBL-CDS" id="BAC05957"/>
    </conflict>
</comment>
<comment type="online information" name="Human Olfactory Receptor Data Exploratorium (HORDE)">
    <link uri="http://genome.weizmann.ac.il/horde/card/index/symbol:OR1S2"/>
</comment>
<feature type="chain" id="PRO_0000150452" description="Olfactory receptor 1S2">
    <location>
        <begin position="1"/>
        <end position="325"/>
    </location>
</feature>
<feature type="topological domain" description="Extracellular" evidence="1">
    <location>
        <begin position="1"/>
        <end position="38"/>
    </location>
</feature>
<feature type="transmembrane region" description="Helical; Name=1" evidence="1">
    <location>
        <begin position="39"/>
        <end position="62"/>
    </location>
</feature>
<feature type="topological domain" description="Cytoplasmic" evidence="1">
    <location>
        <begin position="63"/>
        <end position="70"/>
    </location>
</feature>
<feature type="transmembrane region" description="Helical; Name=2" evidence="1">
    <location>
        <begin position="71"/>
        <end position="92"/>
    </location>
</feature>
<feature type="topological domain" description="Extracellular" evidence="1">
    <location>
        <begin position="93"/>
        <end position="113"/>
    </location>
</feature>
<feature type="transmembrane region" description="Helical; Name=3" evidence="1">
    <location>
        <begin position="114"/>
        <end position="133"/>
    </location>
</feature>
<feature type="topological domain" description="Cytoplasmic" evidence="1">
    <location>
        <begin position="134"/>
        <end position="152"/>
    </location>
</feature>
<feature type="transmembrane region" description="Helical; Name=4" evidence="1">
    <location>
        <begin position="153"/>
        <end position="171"/>
    </location>
</feature>
<feature type="topological domain" description="Extracellular" evidence="1">
    <location>
        <begin position="172"/>
        <end position="208"/>
    </location>
</feature>
<feature type="transmembrane region" description="Helical; Name=5" evidence="1">
    <location>
        <begin position="209"/>
        <end position="232"/>
    </location>
</feature>
<feature type="topological domain" description="Cytoplasmic" evidence="1">
    <location>
        <begin position="233"/>
        <end position="249"/>
    </location>
</feature>
<feature type="transmembrane region" description="Helical; Name=6" evidence="1">
    <location>
        <begin position="250"/>
        <end position="272"/>
    </location>
</feature>
<feature type="topological domain" description="Extracellular" evidence="1">
    <location>
        <begin position="273"/>
        <end position="285"/>
    </location>
</feature>
<feature type="transmembrane region" description="Helical; Name=7" evidence="1">
    <location>
        <begin position="286"/>
        <end position="305"/>
    </location>
</feature>
<feature type="topological domain" description="Cytoplasmic" evidence="1">
    <location>
        <begin position="306"/>
        <end position="325"/>
    </location>
</feature>
<feature type="glycosylation site" description="N-linked (GlcNAc...) asparagine" evidence="1">
    <location>
        <position position="18"/>
    </location>
</feature>
<feature type="disulfide bond" evidence="2">
    <location>
        <begin position="110"/>
        <end position="202"/>
    </location>
</feature>
<feature type="sequence variant" id="VAR_062013" description="In dbSNP:rs11229281.">
    <original>I</original>
    <variation>T</variation>
    <location>
        <position position="59"/>
    </location>
</feature>
<feature type="sequence variant" id="VAR_059980" description="In dbSNP:rs11229277.">
    <original>V</original>
    <variation>A</variation>
    <location>
        <position position="225"/>
    </location>
</feature>
<feature type="sequence variant" id="VAR_059981" description="In dbSNP:rs11229278.">
    <original>V</original>
    <variation>I</variation>
    <location>
        <position position="225"/>
    </location>
</feature>
<keyword id="KW-1003">Cell membrane</keyword>
<keyword id="KW-1015">Disulfide bond</keyword>
<keyword id="KW-0297">G-protein coupled receptor</keyword>
<keyword id="KW-0325">Glycoprotein</keyword>
<keyword id="KW-0472">Membrane</keyword>
<keyword id="KW-0552">Olfaction</keyword>
<keyword id="KW-0675">Receptor</keyword>
<keyword id="KW-1185">Reference proteome</keyword>
<keyword id="KW-0716">Sensory transduction</keyword>
<keyword id="KW-0807">Transducer</keyword>
<keyword id="KW-0812">Transmembrane</keyword>
<keyword id="KW-1133">Transmembrane helix</keyword>
<gene>
    <name type="primary">OR1S2</name>
</gene>
<organism>
    <name type="scientific">Homo sapiens</name>
    <name type="common">Human</name>
    <dbReference type="NCBI Taxonomy" id="9606"/>
    <lineage>
        <taxon>Eukaryota</taxon>
        <taxon>Metazoa</taxon>
        <taxon>Chordata</taxon>
        <taxon>Craniata</taxon>
        <taxon>Vertebrata</taxon>
        <taxon>Euteleostomi</taxon>
        <taxon>Mammalia</taxon>
        <taxon>Eutheria</taxon>
        <taxon>Euarchontoglires</taxon>
        <taxon>Primates</taxon>
        <taxon>Haplorrhini</taxon>
        <taxon>Catarrhini</taxon>
        <taxon>Hominidae</taxon>
        <taxon>Homo</taxon>
    </lineage>
</organism>
<proteinExistence type="inferred from homology"/>